<sequence>MSRLGALGGSRAGLGLLLGTAAGLGFLCVLYSQRWKRTQRHGRSHSLPNSLDYAQASERGRQVTQFRAIPGEAGDAAILPSLSQEGQEKVLDRLDFVLTSLMALRREVEELQRSLQGLAGEIVGEVRSHIEENQRVARRRRFPFARERSDSTGSSSVYFTASSGAALTDAESEGGYTTANAESDYERDSDKESGDAEDEVSCETVRMGRKDSLDLDVEAASSPAAAALEEDDSSGREDVQLVLLQADELHQGSKQDKREGFQLLLNNKLAYGSRQDFLWRLARAYSDMSDLTEEESGKKSYALNGKEEAEAALKKGDESAACHLWYAVLCGQLAEHEGISKRIQSGFSFKEHVDKAIELQPEDPRGHFLLGRWCYQVSHLNWLEKKTATALFESPLSATVQDALQSFLKAEELQPGFSKAGRVYISKCYRELGKNSEARKWMKLAQELPDVTNEDSAFQKDLEELEVILG</sequence>
<feature type="chain" id="PRO_0000287511" description="Regulator of microtubule dynamics protein 3">
    <location>
        <begin position="1"/>
        <end position="470"/>
    </location>
</feature>
<feature type="topological domain" description="Mitochondrial intermembrane" evidence="5">
    <location>
        <begin position="1"/>
        <end position="12"/>
    </location>
</feature>
<feature type="transmembrane region" description="Helical" evidence="3">
    <location>
        <begin position="13"/>
        <end position="35"/>
    </location>
</feature>
<feature type="topological domain" description="Cytoplasmic" evidence="5">
    <location>
        <begin position="36"/>
        <end position="470"/>
    </location>
</feature>
<feature type="region of interest" description="Disordered" evidence="4">
    <location>
        <begin position="168"/>
        <end position="205"/>
    </location>
</feature>
<feature type="coiled-coil region" evidence="3">
    <location>
        <begin position="91"/>
        <end position="125"/>
    </location>
</feature>
<feature type="short sequence motif" description="FFAT" evidence="2">
    <location>
        <begin position="157"/>
        <end position="163"/>
    </location>
</feature>
<feature type="compositionally biased region" description="Basic and acidic residues" evidence="4">
    <location>
        <begin position="184"/>
        <end position="194"/>
    </location>
</feature>
<feature type="modified residue" description="Phosphoserine" evidence="2">
    <location>
        <position position="44"/>
    </location>
</feature>
<feature type="modified residue" description="Phosphoserine" evidence="7 9">
    <location>
        <position position="46"/>
    </location>
</feature>
<feature type="modified residue" description="Phosphoserine" evidence="8 10">
    <location>
        <position position="50"/>
    </location>
</feature>
<feature type="modified residue" description="Phosphoserine" evidence="8 10">
    <location>
        <position position="57"/>
    </location>
</feature>
<feature type="modified residue" description="Phosphothreonine" evidence="2">
    <location>
        <position position="160"/>
    </location>
</feature>
<feature type="modified residue" description="Phosphoserine" evidence="2">
    <location>
        <position position="183"/>
    </location>
</feature>
<feature type="modified residue" description="Phosphoserine" evidence="2">
    <location>
        <position position="193"/>
    </location>
</feature>
<feature type="modified residue" description="Phosphoserine" evidence="7 10">
    <location>
        <position position="212"/>
    </location>
</feature>
<feature type="modified residue" description="Phosphoserine" evidence="2">
    <location>
        <position position="233"/>
    </location>
</feature>
<feature type="sequence conflict" description="In Ref. 1; BAE31902/BAE31937." evidence="5" ref="1">
    <original>K</original>
    <variation>R</variation>
    <location>
        <position position="210"/>
    </location>
</feature>
<feature type="sequence conflict" description="In Ref. 3; AAH61186." evidence="5" ref="3">
    <original>A</original>
    <variation>S</variation>
    <location>
        <position position="224"/>
    </location>
</feature>
<feature type="sequence conflict" description="In Ref. 1; BAE27056 and 3; AAH61186." evidence="5" ref="1 3">
    <original>K</original>
    <variation>E</variation>
    <location>
        <position position="254"/>
    </location>
</feature>
<proteinExistence type="evidence at protein level"/>
<keyword id="KW-0053">Apoptosis</keyword>
<keyword id="KW-0175">Coiled coil</keyword>
<keyword id="KW-0963">Cytoplasm</keyword>
<keyword id="KW-0206">Cytoskeleton</keyword>
<keyword id="KW-0221">Differentiation</keyword>
<keyword id="KW-0472">Membrane</keyword>
<keyword id="KW-0493">Microtubule</keyword>
<keyword id="KW-0496">Mitochondrion</keyword>
<keyword id="KW-1000">Mitochondrion outer membrane</keyword>
<keyword id="KW-0539">Nucleus</keyword>
<keyword id="KW-0597">Phosphoprotein</keyword>
<keyword id="KW-1185">Reference proteome</keyword>
<keyword id="KW-0812">Transmembrane</keyword>
<keyword id="KW-1133">Transmembrane helix</keyword>
<accession>Q3UJU9</accession>
<accession>A9UN03</accession>
<accession>Q3U5Y8</accession>
<accession>Q3UB61</accession>
<accession>Q6P8M2</accession>
<accession>Q7TNF2</accession>
<protein>
    <recommendedName>
        <fullName evidence="5">Regulator of microtubule dynamics protein 3</fullName>
        <shortName>RMD-3</shortName>
        <shortName>mRMD-3</shortName>
    </recommendedName>
    <alternativeName>
        <fullName>Protein FAM82A2</fullName>
    </alternativeName>
    <alternativeName>
        <fullName>Protein FAM82C</fullName>
    </alternativeName>
</protein>
<organism>
    <name type="scientific">Mus musculus</name>
    <name type="common">Mouse</name>
    <dbReference type="NCBI Taxonomy" id="10090"/>
    <lineage>
        <taxon>Eukaryota</taxon>
        <taxon>Metazoa</taxon>
        <taxon>Chordata</taxon>
        <taxon>Craniata</taxon>
        <taxon>Vertebrata</taxon>
        <taxon>Euteleostomi</taxon>
        <taxon>Mammalia</taxon>
        <taxon>Eutheria</taxon>
        <taxon>Euarchontoglires</taxon>
        <taxon>Glires</taxon>
        <taxon>Rodentia</taxon>
        <taxon>Myomorpha</taxon>
        <taxon>Muroidea</taxon>
        <taxon>Muridae</taxon>
        <taxon>Murinae</taxon>
        <taxon>Mus</taxon>
        <taxon>Mus</taxon>
    </lineage>
</organism>
<gene>
    <name evidence="6" type="primary">Rmdn3</name>
    <name type="synonym">Fam82a2</name>
    <name type="synonym">Fam82c</name>
</gene>
<name>RMD3_MOUSE</name>
<reference key="1">
    <citation type="journal article" date="2005" name="Science">
        <title>The transcriptional landscape of the mammalian genome.</title>
        <authorList>
            <person name="Carninci P."/>
            <person name="Kasukawa T."/>
            <person name="Katayama S."/>
            <person name="Gough J."/>
            <person name="Frith M.C."/>
            <person name="Maeda N."/>
            <person name="Oyama R."/>
            <person name="Ravasi T."/>
            <person name="Lenhard B."/>
            <person name="Wells C."/>
            <person name="Kodzius R."/>
            <person name="Shimokawa K."/>
            <person name="Bajic V.B."/>
            <person name="Brenner S.E."/>
            <person name="Batalov S."/>
            <person name="Forrest A.R."/>
            <person name="Zavolan M."/>
            <person name="Davis M.J."/>
            <person name="Wilming L.G."/>
            <person name="Aidinis V."/>
            <person name="Allen J.E."/>
            <person name="Ambesi-Impiombato A."/>
            <person name="Apweiler R."/>
            <person name="Aturaliya R.N."/>
            <person name="Bailey T.L."/>
            <person name="Bansal M."/>
            <person name="Baxter L."/>
            <person name="Beisel K.W."/>
            <person name="Bersano T."/>
            <person name="Bono H."/>
            <person name="Chalk A.M."/>
            <person name="Chiu K.P."/>
            <person name="Choudhary V."/>
            <person name="Christoffels A."/>
            <person name="Clutterbuck D.R."/>
            <person name="Crowe M.L."/>
            <person name="Dalla E."/>
            <person name="Dalrymple B.P."/>
            <person name="de Bono B."/>
            <person name="Della Gatta G."/>
            <person name="di Bernardo D."/>
            <person name="Down T."/>
            <person name="Engstrom P."/>
            <person name="Fagiolini M."/>
            <person name="Faulkner G."/>
            <person name="Fletcher C.F."/>
            <person name="Fukushima T."/>
            <person name="Furuno M."/>
            <person name="Futaki S."/>
            <person name="Gariboldi M."/>
            <person name="Georgii-Hemming P."/>
            <person name="Gingeras T.R."/>
            <person name="Gojobori T."/>
            <person name="Green R.E."/>
            <person name="Gustincich S."/>
            <person name="Harbers M."/>
            <person name="Hayashi Y."/>
            <person name="Hensch T.K."/>
            <person name="Hirokawa N."/>
            <person name="Hill D."/>
            <person name="Huminiecki L."/>
            <person name="Iacono M."/>
            <person name="Ikeo K."/>
            <person name="Iwama A."/>
            <person name="Ishikawa T."/>
            <person name="Jakt M."/>
            <person name="Kanapin A."/>
            <person name="Katoh M."/>
            <person name="Kawasawa Y."/>
            <person name="Kelso J."/>
            <person name="Kitamura H."/>
            <person name="Kitano H."/>
            <person name="Kollias G."/>
            <person name="Krishnan S.P."/>
            <person name="Kruger A."/>
            <person name="Kummerfeld S.K."/>
            <person name="Kurochkin I.V."/>
            <person name="Lareau L.F."/>
            <person name="Lazarevic D."/>
            <person name="Lipovich L."/>
            <person name="Liu J."/>
            <person name="Liuni S."/>
            <person name="McWilliam S."/>
            <person name="Madan Babu M."/>
            <person name="Madera M."/>
            <person name="Marchionni L."/>
            <person name="Matsuda H."/>
            <person name="Matsuzawa S."/>
            <person name="Miki H."/>
            <person name="Mignone F."/>
            <person name="Miyake S."/>
            <person name="Morris K."/>
            <person name="Mottagui-Tabar S."/>
            <person name="Mulder N."/>
            <person name="Nakano N."/>
            <person name="Nakauchi H."/>
            <person name="Ng P."/>
            <person name="Nilsson R."/>
            <person name="Nishiguchi S."/>
            <person name="Nishikawa S."/>
            <person name="Nori F."/>
            <person name="Ohara O."/>
            <person name="Okazaki Y."/>
            <person name="Orlando V."/>
            <person name="Pang K.C."/>
            <person name="Pavan W.J."/>
            <person name="Pavesi G."/>
            <person name="Pesole G."/>
            <person name="Petrovsky N."/>
            <person name="Piazza S."/>
            <person name="Reed J."/>
            <person name="Reid J.F."/>
            <person name="Ring B.Z."/>
            <person name="Ringwald M."/>
            <person name="Rost B."/>
            <person name="Ruan Y."/>
            <person name="Salzberg S.L."/>
            <person name="Sandelin A."/>
            <person name="Schneider C."/>
            <person name="Schoenbach C."/>
            <person name="Sekiguchi K."/>
            <person name="Semple C.A."/>
            <person name="Seno S."/>
            <person name="Sessa L."/>
            <person name="Sheng Y."/>
            <person name="Shibata Y."/>
            <person name="Shimada H."/>
            <person name="Shimada K."/>
            <person name="Silva D."/>
            <person name="Sinclair B."/>
            <person name="Sperling S."/>
            <person name="Stupka E."/>
            <person name="Sugiura K."/>
            <person name="Sultana R."/>
            <person name="Takenaka Y."/>
            <person name="Taki K."/>
            <person name="Tammoja K."/>
            <person name="Tan S.L."/>
            <person name="Tang S."/>
            <person name="Taylor M.S."/>
            <person name="Tegner J."/>
            <person name="Teichmann S.A."/>
            <person name="Ueda H.R."/>
            <person name="van Nimwegen E."/>
            <person name="Verardo R."/>
            <person name="Wei C.L."/>
            <person name="Yagi K."/>
            <person name="Yamanishi H."/>
            <person name="Zabarovsky E."/>
            <person name="Zhu S."/>
            <person name="Zimmer A."/>
            <person name="Hide W."/>
            <person name="Bult C."/>
            <person name="Grimmond S.M."/>
            <person name="Teasdale R.D."/>
            <person name="Liu E.T."/>
            <person name="Brusic V."/>
            <person name="Quackenbush J."/>
            <person name="Wahlestedt C."/>
            <person name="Mattick J.S."/>
            <person name="Hume D.A."/>
            <person name="Kai C."/>
            <person name="Sasaki D."/>
            <person name="Tomaru Y."/>
            <person name="Fukuda S."/>
            <person name="Kanamori-Katayama M."/>
            <person name="Suzuki M."/>
            <person name="Aoki J."/>
            <person name="Arakawa T."/>
            <person name="Iida J."/>
            <person name="Imamura K."/>
            <person name="Itoh M."/>
            <person name="Kato T."/>
            <person name="Kawaji H."/>
            <person name="Kawagashira N."/>
            <person name="Kawashima T."/>
            <person name="Kojima M."/>
            <person name="Kondo S."/>
            <person name="Konno H."/>
            <person name="Nakano K."/>
            <person name="Ninomiya N."/>
            <person name="Nishio T."/>
            <person name="Okada M."/>
            <person name="Plessy C."/>
            <person name="Shibata K."/>
            <person name="Shiraki T."/>
            <person name="Suzuki S."/>
            <person name="Tagami M."/>
            <person name="Waki K."/>
            <person name="Watahiki A."/>
            <person name="Okamura-Oho Y."/>
            <person name="Suzuki H."/>
            <person name="Kawai J."/>
            <person name="Hayashizaki Y."/>
        </authorList>
    </citation>
    <scope>NUCLEOTIDE SEQUENCE [LARGE SCALE MRNA]</scope>
    <source>
        <strain>C57BL/6J</strain>
        <strain>DBA/2J</strain>
        <tissue>Bone marrow</tissue>
    </source>
</reference>
<reference key="2">
    <citation type="journal article" date="2009" name="PLoS Biol.">
        <title>Lineage-specific biology revealed by a finished genome assembly of the mouse.</title>
        <authorList>
            <person name="Church D.M."/>
            <person name="Goodstadt L."/>
            <person name="Hillier L.W."/>
            <person name="Zody M.C."/>
            <person name="Goldstein S."/>
            <person name="She X."/>
            <person name="Bult C.J."/>
            <person name="Agarwala R."/>
            <person name="Cherry J.L."/>
            <person name="DiCuccio M."/>
            <person name="Hlavina W."/>
            <person name="Kapustin Y."/>
            <person name="Meric P."/>
            <person name="Maglott D."/>
            <person name="Birtle Z."/>
            <person name="Marques A.C."/>
            <person name="Graves T."/>
            <person name="Zhou S."/>
            <person name="Teague B."/>
            <person name="Potamousis K."/>
            <person name="Churas C."/>
            <person name="Place M."/>
            <person name="Herschleb J."/>
            <person name="Runnheim R."/>
            <person name="Forrest D."/>
            <person name="Amos-Landgraf J."/>
            <person name="Schwartz D.C."/>
            <person name="Cheng Z."/>
            <person name="Lindblad-Toh K."/>
            <person name="Eichler E.E."/>
            <person name="Ponting C.P."/>
        </authorList>
    </citation>
    <scope>NUCLEOTIDE SEQUENCE [LARGE SCALE GENOMIC DNA]</scope>
    <source>
        <strain>C57BL/6J</strain>
    </source>
</reference>
<reference key="3">
    <citation type="journal article" date="2004" name="Genome Res.">
        <title>The status, quality, and expansion of the NIH full-length cDNA project: the Mammalian Gene Collection (MGC).</title>
        <authorList>
            <consortium name="The MGC Project Team"/>
        </authorList>
    </citation>
    <scope>NUCLEOTIDE SEQUENCE [LARGE SCALE MRNA]</scope>
    <source>
        <strain>C57BL/6J</strain>
        <tissue>Brain</tissue>
        <tissue>Testis</tissue>
    </source>
</reference>
<reference key="4">
    <citation type="journal article" date="2007" name="J. Cell Biol.">
        <title>RMD-1, a novel microtubule-associated protein, functions in chromosome segregation in Caenorhabditis elegans.</title>
        <authorList>
            <person name="Oishi K."/>
            <person name="Okano H."/>
            <person name="Sawa H."/>
        </authorList>
    </citation>
    <scope>IDENTIFICATION</scope>
</reference>
<reference key="5">
    <citation type="journal article" date="2007" name="Mol. Cell. Proteomics">
        <title>Mitochondrial phosphoproteome revealed by an improved IMAC method and MS/MS/MS.</title>
        <authorList>
            <person name="Lee J."/>
            <person name="Xu Y."/>
            <person name="Chen Y."/>
            <person name="Sprung R."/>
            <person name="Kim S.C."/>
            <person name="Xie S."/>
            <person name="Zhao Y."/>
        </authorList>
    </citation>
    <scope>PHOSPHORYLATION [LARGE SCALE ANALYSIS] AT SER-46 AND SER-212</scope>
    <scope>IDENTIFICATION BY MASS SPECTROMETRY [LARGE SCALE ANALYSIS]</scope>
    <source>
        <tissue>Liver</tissue>
    </source>
</reference>
<reference key="6">
    <citation type="journal article" date="2007" name="Proc. Natl. Acad. Sci. U.S.A.">
        <title>Large-scale phosphorylation analysis of mouse liver.</title>
        <authorList>
            <person name="Villen J."/>
            <person name="Beausoleil S.A."/>
            <person name="Gerber S.A."/>
            <person name="Gygi S.P."/>
        </authorList>
    </citation>
    <scope>PHOSPHORYLATION [LARGE SCALE ANALYSIS] AT SER-50 AND SER-57</scope>
    <scope>IDENTIFICATION BY MASS SPECTROMETRY [LARGE SCALE ANALYSIS]</scope>
    <source>
        <tissue>Liver</tissue>
    </source>
</reference>
<reference key="7">
    <citation type="journal article" date="2008" name="J. Proteome Res.">
        <title>Specific phosphopeptide enrichment with immobilized titanium ion affinity chromatography adsorbent for phosphoproteome analysis.</title>
        <authorList>
            <person name="Zhou H."/>
            <person name="Ye M."/>
            <person name="Dong J."/>
            <person name="Han G."/>
            <person name="Jiang X."/>
            <person name="Wu R."/>
            <person name="Zou H."/>
        </authorList>
    </citation>
    <scope>IDENTIFICATION BY MASS SPECTROMETRY [LARGE SCALE ANALYSIS]</scope>
    <source>
        <tissue>Liver</tissue>
    </source>
</reference>
<reference key="8">
    <citation type="journal article" date="2009" name="Immunity">
        <title>The phagosomal proteome in interferon-gamma-activated macrophages.</title>
        <authorList>
            <person name="Trost M."/>
            <person name="English L."/>
            <person name="Lemieux S."/>
            <person name="Courcelles M."/>
            <person name="Desjardins M."/>
            <person name="Thibault P."/>
        </authorList>
    </citation>
    <scope>PHOSPHORYLATION [LARGE SCALE ANALYSIS] AT SER-46</scope>
    <scope>IDENTIFICATION BY MASS SPECTROMETRY [LARGE SCALE ANALYSIS]</scope>
</reference>
<reference key="9">
    <citation type="journal article" date="2010" name="Cell">
        <title>A tissue-specific atlas of mouse protein phosphorylation and expression.</title>
        <authorList>
            <person name="Huttlin E.L."/>
            <person name="Jedrychowski M.P."/>
            <person name="Elias J.E."/>
            <person name="Goswami T."/>
            <person name="Rad R."/>
            <person name="Beausoleil S.A."/>
            <person name="Villen J."/>
            <person name="Haas W."/>
            <person name="Sowa M.E."/>
            <person name="Gygi S.P."/>
        </authorList>
    </citation>
    <scope>PHOSPHORYLATION [LARGE SCALE ANALYSIS] AT SER-50; SER-57 AND SER-212</scope>
    <scope>IDENTIFICATION BY MASS SPECTROMETRY [LARGE SCALE ANALYSIS]</scope>
    <source>
        <tissue>Brain</tissue>
        <tissue>Brown adipose tissue</tissue>
        <tissue>Heart</tissue>
        <tissue>Kidney</tissue>
        <tissue>Liver</tissue>
        <tissue>Lung</tissue>
        <tissue>Pancreas</tissue>
        <tissue>Spleen</tissue>
        <tissue>Testis</tissue>
    </source>
</reference>
<dbReference type="EMBL" id="AK146299">
    <property type="protein sequence ID" value="BAE27056.1"/>
    <property type="molecule type" value="mRNA"/>
</dbReference>
<dbReference type="EMBL" id="AK151090">
    <property type="protein sequence ID" value="BAE30103.1"/>
    <property type="molecule type" value="mRNA"/>
</dbReference>
<dbReference type="EMBL" id="AK153369">
    <property type="protein sequence ID" value="BAE31937.1"/>
    <property type="molecule type" value="mRNA"/>
</dbReference>
<dbReference type="EMBL" id="AK153322">
    <property type="protein sequence ID" value="BAE31902.1"/>
    <property type="molecule type" value="mRNA"/>
</dbReference>
<dbReference type="EMBL" id="AL772264">
    <property type="status" value="NOT_ANNOTATED_CDS"/>
    <property type="molecule type" value="Genomic_DNA"/>
</dbReference>
<dbReference type="EMBL" id="BC055754">
    <property type="protein sequence ID" value="AAH55754.1"/>
    <property type="status" value="ALT_INIT"/>
    <property type="molecule type" value="mRNA"/>
</dbReference>
<dbReference type="EMBL" id="BC061186">
    <property type="protein sequence ID" value="AAH61186.1"/>
    <property type="status" value="ALT_SEQ"/>
    <property type="molecule type" value="mRNA"/>
</dbReference>
<dbReference type="EMBL" id="BR000695">
    <property type="protein sequence ID" value="FAA00420.1"/>
    <property type="status" value="ALT_INIT"/>
    <property type="molecule type" value="mRNA"/>
</dbReference>
<dbReference type="CCDS" id="CCDS16591.1"/>
<dbReference type="RefSeq" id="NP_001028308.1">
    <property type="nucleotide sequence ID" value="NM_001033136.3"/>
</dbReference>
<dbReference type="SMR" id="Q3UJU9"/>
<dbReference type="BioGRID" id="212454">
    <property type="interactions" value="85"/>
</dbReference>
<dbReference type="FunCoup" id="Q3UJU9">
    <property type="interactions" value="748"/>
</dbReference>
<dbReference type="IntAct" id="Q3UJU9">
    <property type="interactions" value="79"/>
</dbReference>
<dbReference type="MINT" id="Q3UJU9"/>
<dbReference type="STRING" id="10090.ENSMUSP00000092283"/>
<dbReference type="GlyGen" id="Q3UJU9">
    <property type="glycosylation" value="1 site, 1 O-linked glycan (1 site)"/>
</dbReference>
<dbReference type="iPTMnet" id="Q3UJU9"/>
<dbReference type="PhosphoSitePlus" id="Q3UJU9"/>
<dbReference type="SwissPalm" id="Q3UJU9"/>
<dbReference type="jPOST" id="Q3UJU9"/>
<dbReference type="PaxDb" id="10090-ENSMUSP00000092283"/>
<dbReference type="PeptideAtlas" id="Q3UJU9"/>
<dbReference type="ProteomicsDB" id="299835"/>
<dbReference type="Pumba" id="Q3UJU9"/>
<dbReference type="Antibodypedia" id="2473">
    <property type="antibodies" value="191 antibodies from 23 providers"/>
</dbReference>
<dbReference type="Ensembl" id="ENSMUST00000094695.12">
    <property type="protein sequence ID" value="ENSMUSP00000092283.6"/>
    <property type="gene ID" value="ENSMUSG00000070730.12"/>
</dbReference>
<dbReference type="GeneID" id="67809"/>
<dbReference type="KEGG" id="mmu:67809"/>
<dbReference type="UCSC" id="uc008lte.2">
    <property type="organism name" value="mouse"/>
</dbReference>
<dbReference type="AGR" id="MGI:1915059"/>
<dbReference type="CTD" id="55177"/>
<dbReference type="MGI" id="MGI:1915059">
    <property type="gene designation" value="Rmdn3"/>
</dbReference>
<dbReference type="VEuPathDB" id="HostDB:ENSMUSG00000070730"/>
<dbReference type="eggNOG" id="ENOG502QWUP">
    <property type="taxonomic scope" value="Eukaryota"/>
</dbReference>
<dbReference type="GeneTree" id="ENSGT00950000182992"/>
<dbReference type="HOGENOM" id="CLU_046369_0_2_1"/>
<dbReference type="InParanoid" id="Q3UJU9"/>
<dbReference type="OMA" id="QHESMHS"/>
<dbReference type="OrthoDB" id="512473at2759"/>
<dbReference type="PhylomeDB" id="Q3UJU9"/>
<dbReference type="TreeFam" id="TF315854"/>
<dbReference type="BioGRID-ORCS" id="67809">
    <property type="hits" value="8 hits in 77 CRISPR screens"/>
</dbReference>
<dbReference type="CD-CODE" id="CE726F99">
    <property type="entry name" value="Postsynaptic density"/>
</dbReference>
<dbReference type="ChiTaRS" id="Rmdn3">
    <property type="organism name" value="mouse"/>
</dbReference>
<dbReference type="PRO" id="PR:Q3UJU9"/>
<dbReference type="Proteomes" id="UP000000589">
    <property type="component" value="Chromosome 2"/>
</dbReference>
<dbReference type="RNAct" id="Q3UJU9">
    <property type="molecule type" value="protein"/>
</dbReference>
<dbReference type="Bgee" id="ENSMUSG00000070730">
    <property type="expression patterns" value="Expressed in pigmented layer of retina and 265 other cell types or tissues"/>
</dbReference>
<dbReference type="ExpressionAtlas" id="Q3UJU9">
    <property type="expression patterns" value="baseline and differential"/>
</dbReference>
<dbReference type="GO" id="GO:0098978">
    <property type="term" value="C:glutamatergic synapse"/>
    <property type="evidence" value="ECO:0007669"/>
    <property type="project" value="Ensembl"/>
</dbReference>
<dbReference type="GO" id="GO:0045171">
    <property type="term" value="C:intercellular bridge"/>
    <property type="evidence" value="ECO:0007669"/>
    <property type="project" value="Ensembl"/>
</dbReference>
<dbReference type="GO" id="GO:0005741">
    <property type="term" value="C:mitochondrial outer membrane"/>
    <property type="evidence" value="ECO:0000250"/>
    <property type="project" value="UniProtKB"/>
</dbReference>
<dbReference type="GO" id="GO:0005739">
    <property type="term" value="C:mitochondrion"/>
    <property type="evidence" value="ECO:0007005"/>
    <property type="project" value="MGI"/>
</dbReference>
<dbReference type="GO" id="GO:0097431">
    <property type="term" value="C:mitotic spindle pole"/>
    <property type="evidence" value="ECO:0007669"/>
    <property type="project" value="Ensembl"/>
</dbReference>
<dbReference type="GO" id="GO:0005634">
    <property type="term" value="C:nucleus"/>
    <property type="evidence" value="ECO:0007669"/>
    <property type="project" value="UniProtKB-SubCell"/>
</dbReference>
<dbReference type="GO" id="GO:0044232">
    <property type="term" value="C:organelle membrane contact site"/>
    <property type="evidence" value="ECO:0007669"/>
    <property type="project" value="Ensembl"/>
</dbReference>
<dbReference type="GO" id="GO:0098794">
    <property type="term" value="C:postsynapse"/>
    <property type="evidence" value="ECO:0007669"/>
    <property type="project" value="Ensembl"/>
</dbReference>
<dbReference type="GO" id="GO:0098793">
    <property type="term" value="C:presynapse"/>
    <property type="evidence" value="ECO:0007669"/>
    <property type="project" value="Ensembl"/>
</dbReference>
<dbReference type="GO" id="GO:0005876">
    <property type="term" value="C:spindle microtubule"/>
    <property type="evidence" value="ECO:0007669"/>
    <property type="project" value="Ensembl"/>
</dbReference>
<dbReference type="GO" id="GO:0008017">
    <property type="term" value="F:microtubule binding"/>
    <property type="evidence" value="ECO:0007669"/>
    <property type="project" value="Ensembl"/>
</dbReference>
<dbReference type="GO" id="GO:0006915">
    <property type="term" value="P:apoptotic process"/>
    <property type="evidence" value="ECO:0007669"/>
    <property type="project" value="UniProtKB-KW"/>
</dbReference>
<dbReference type="GO" id="GO:0030154">
    <property type="term" value="P:cell differentiation"/>
    <property type="evidence" value="ECO:0007669"/>
    <property type="project" value="UniProtKB-KW"/>
</dbReference>
<dbReference type="GO" id="GO:0006874">
    <property type="term" value="P:intracellular calcium ion homeostasis"/>
    <property type="evidence" value="ECO:0000250"/>
    <property type="project" value="UniProtKB"/>
</dbReference>
<dbReference type="FunFam" id="1.25.40.10:FF:000310">
    <property type="entry name" value="Regulator of microtubule dynamics protein 3"/>
    <property type="match status" value="1"/>
</dbReference>
<dbReference type="Gene3D" id="1.25.40.10">
    <property type="entry name" value="Tetratricopeptide repeat domain"/>
    <property type="match status" value="1"/>
</dbReference>
<dbReference type="InterPro" id="IPR049039">
    <property type="entry name" value="RMD1-3_a_helical_rpt"/>
</dbReference>
<dbReference type="InterPro" id="IPR011990">
    <property type="entry name" value="TPR-like_helical_dom_sf"/>
</dbReference>
<dbReference type="PANTHER" id="PTHR16056">
    <property type="entry name" value="REGULATOR OF MICROTUBULE DYNAMICS PROTEIN"/>
    <property type="match status" value="1"/>
</dbReference>
<dbReference type="PANTHER" id="PTHR16056:SF18">
    <property type="entry name" value="REGULATOR OF MICROTUBULE DYNAMICS PROTEIN 3"/>
    <property type="match status" value="1"/>
</dbReference>
<dbReference type="Pfam" id="PF21033">
    <property type="entry name" value="RMD1-3"/>
    <property type="match status" value="1"/>
</dbReference>
<dbReference type="SUPFAM" id="SSF48452">
    <property type="entry name" value="TPR-like"/>
    <property type="match status" value="1"/>
</dbReference>
<comment type="function">
    <text evidence="1">Involved in cellular calcium homeostasis regulation (By similarity). May participate in differentiation and apoptosis of keratinocytes. Overexpression induces apoptosis (By similarity).</text>
</comment>
<comment type="subunit">
    <text evidence="2">Interacts with PTPN2. Interacts with microtubules. Interacts with VAPB. Interacts (via FFAT motif) with MOSPD2 (via MSP domain). Interacts (via phosphorylated FFAT motif) with MOSPD2, VAPA and VAPB.</text>
</comment>
<comment type="subcellular location">
    <subcellularLocation>
        <location evidence="2">Mitochondrion outer membrane</location>
        <topology evidence="2">Single-pass membrane protein</topology>
    </subcellularLocation>
    <subcellularLocation>
        <location evidence="2">Cytoplasm</location>
    </subcellularLocation>
    <subcellularLocation>
        <location evidence="2">Nucleus</location>
    </subcellularLocation>
    <subcellularLocation>
        <location evidence="2">Cytoplasm</location>
        <location evidence="2">Cytoskeleton</location>
        <location evidence="2">Spindle</location>
    </subcellularLocation>
    <subcellularLocation>
        <location evidence="2">Cytoplasm</location>
        <location evidence="2">Cytoskeleton</location>
        <location evidence="2">Spindle pole</location>
    </subcellularLocation>
    <text evidence="2">In interphase localizes in the cytoplasm, and during mitosis localizes to the spindle microtubules and spindle poles.</text>
</comment>
<comment type="domain">
    <text evidence="1">The transmembrane region is required for mitochondrial localization.</text>
</comment>
<comment type="domain">
    <text evidence="2">The FFAT motif is required for interaction with MOSPD2. The FFAT motif is involved in the interaction with VAPA and VAPB and its phosphorylation regulates these interactions.</text>
</comment>
<comment type="PTM">
    <text evidence="2">Phosphorylation at Thr-160 of the FFAT motif activates interaction with MOSPD2, VAPA and VAPB.</text>
</comment>
<comment type="similarity">
    <text evidence="5">Belongs to the RMDN family.</text>
</comment>
<comment type="sequence caution" evidence="5">
    <conflict type="erroneous initiation">
        <sequence resource="EMBL-CDS" id="AAH55754"/>
    </conflict>
    <text>Extended N-terminus.</text>
</comment>
<comment type="sequence caution" evidence="5">
    <conflict type="miscellaneous discrepancy">
        <sequence resource="EMBL-CDS" id="AAH61186"/>
    </conflict>
    <text>Contaminating sequence. Potential poly-A sequence.</text>
</comment>
<comment type="sequence caution" evidence="5">
    <conflict type="erroneous initiation">
        <sequence resource="EMBL-CDS" id="FAA00420"/>
    </conflict>
    <text>Truncated N-terminus.</text>
</comment>
<evidence type="ECO:0000250" key="1"/>
<evidence type="ECO:0000250" key="2">
    <source>
        <dbReference type="UniProtKB" id="Q96TC7"/>
    </source>
</evidence>
<evidence type="ECO:0000255" key="3"/>
<evidence type="ECO:0000256" key="4">
    <source>
        <dbReference type="SAM" id="MobiDB-lite"/>
    </source>
</evidence>
<evidence type="ECO:0000305" key="5"/>
<evidence type="ECO:0000312" key="6">
    <source>
        <dbReference type="MGI" id="MGI:1915059"/>
    </source>
</evidence>
<evidence type="ECO:0007744" key="7">
    <source>
    </source>
</evidence>
<evidence type="ECO:0007744" key="8">
    <source>
    </source>
</evidence>
<evidence type="ECO:0007744" key="9">
    <source>
    </source>
</evidence>
<evidence type="ECO:0007744" key="10">
    <source>
    </source>
</evidence>